<reference key="1">
    <citation type="journal article" date="2006" name="Proc. Natl. Acad. Sci. U.S.A.">
        <title>Comparative genomics of the lactic acid bacteria.</title>
        <authorList>
            <person name="Makarova K.S."/>
            <person name="Slesarev A."/>
            <person name="Wolf Y.I."/>
            <person name="Sorokin A."/>
            <person name="Mirkin B."/>
            <person name="Koonin E.V."/>
            <person name="Pavlov A."/>
            <person name="Pavlova N."/>
            <person name="Karamychev V."/>
            <person name="Polouchine N."/>
            <person name="Shakhova V."/>
            <person name="Grigoriev I."/>
            <person name="Lou Y."/>
            <person name="Rohksar D."/>
            <person name="Lucas S."/>
            <person name="Huang K."/>
            <person name="Goodstein D.M."/>
            <person name="Hawkins T."/>
            <person name="Plengvidhya V."/>
            <person name="Welker D."/>
            <person name="Hughes J."/>
            <person name="Goh Y."/>
            <person name="Benson A."/>
            <person name="Baldwin K."/>
            <person name="Lee J.-H."/>
            <person name="Diaz-Muniz I."/>
            <person name="Dosti B."/>
            <person name="Smeianov V."/>
            <person name="Wechter W."/>
            <person name="Barabote R."/>
            <person name="Lorca G."/>
            <person name="Altermann E."/>
            <person name="Barrangou R."/>
            <person name="Ganesan B."/>
            <person name="Xie Y."/>
            <person name="Rawsthorne H."/>
            <person name="Tamir D."/>
            <person name="Parker C."/>
            <person name="Breidt F."/>
            <person name="Broadbent J.R."/>
            <person name="Hutkins R."/>
            <person name="O'Sullivan D."/>
            <person name="Steele J."/>
            <person name="Unlu G."/>
            <person name="Saier M.H. Jr."/>
            <person name="Klaenhammer T."/>
            <person name="Richardson P."/>
            <person name="Kozyavkin S."/>
            <person name="Weimer B.C."/>
            <person name="Mills D.A."/>
        </authorList>
    </citation>
    <scope>NUCLEOTIDE SEQUENCE [LARGE SCALE GENOMIC DNA]</scope>
    <source>
        <strain>ATCC BAA-331 / PSU-1</strain>
    </source>
</reference>
<gene>
    <name evidence="1" type="primary">rbsD</name>
    <name type="ordered locus">OEOE_1613</name>
</gene>
<organism>
    <name type="scientific">Oenococcus oeni (strain ATCC BAA-331 / PSU-1)</name>
    <dbReference type="NCBI Taxonomy" id="203123"/>
    <lineage>
        <taxon>Bacteria</taxon>
        <taxon>Bacillati</taxon>
        <taxon>Bacillota</taxon>
        <taxon>Bacilli</taxon>
        <taxon>Lactobacillales</taxon>
        <taxon>Lactobacillaceae</taxon>
        <taxon>Oenococcus</taxon>
    </lineage>
</organism>
<sequence>MKKTTVINSEISSVIAGMGHMDWLGIGDAGMPVPLGTKKIDLALTKNLPSFIDVLKNVLTELEVQKIYLADEIKTKNPEQLQAIKQLMPNVEIEFVPHSELKKDLAKTHAFIRTGEMTAFSNIILESGVVF</sequence>
<dbReference type="EC" id="5.4.99.62" evidence="1"/>
<dbReference type="EMBL" id="CP000411">
    <property type="protein sequence ID" value="ABJ57465.1"/>
    <property type="molecule type" value="Genomic_DNA"/>
</dbReference>
<dbReference type="RefSeq" id="WP_002819433.1">
    <property type="nucleotide sequence ID" value="NC_008528.1"/>
</dbReference>
<dbReference type="SMR" id="Q04DK7"/>
<dbReference type="STRING" id="203123.OEOE_1613"/>
<dbReference type="GeneID" id="75066524"/>
<dbReference type="KEGG" id="ooe:OEOE_1613"/>
<dbReference type="eggNOG" id="COG1869">
    <property type="taxonomic scope" value="Bacteria"/>
</dbReference>
<dbReference type="HOGENOM" id="CLU_135498_0_0_9"/>
<dbReference type="UniPathway" id="UPA00916">
    <property type="reaction ID" value="UER00888"/>
</dbReference>
<dbReference type="Proteomes" id="UP000000774">
    <property type="component" value="Chromosome"/>
</dbReference>
<dbReference type="GO" id="GO:0005829">
    <property type="term" value="C:cytosol"/>
    <property type="evidence" value="ECO:0007669"/>
    <property type="project" value="TreeGrafter"/>
</dbReference>
<dbReference type="GO" id="GO:0062193">
    <property type="term" value="F:D-ribose pyranase activity"/>
    <property type="evidence" value="ECO:0007669"/>
    <property type="project" value="UniProtKB-EC"/>
</dbReference>
<dbReference type="GO" id="GO:0016872">
    <property type="term" value="F:intramolecular lyase activity"/>
    <property type="evidence" value="ECO:0007669"/>
    <property type="project" value="UniProtKB-UniRule"/>
</dbReference>
<dbReference type="GO" id="GO:0048029">
    <property type="term" value="F:monosaccharide binding"/>
    <property type="evidence" value="ECO:0007669"/>
    <property type="project" value="InterPro"/>
</dbReference>
<dbReference type="GO" id="GO:0019303">
    <property type="term" value="P:D-ribose catabolic process"/>
    <property type="evidence" value="ECO:0007669"/>
    <property type="project" value="UniProtKB-UniRule"/>
</dbReference>
<dbReference type="FunFam" id="3.40.1650.10:FF:000004">
    <property type="entry name" value="D-ribose pyranase"/>
    <property type="match status" value="1"/>
</dbReference>
<dbReference type="Gene3D" id="3.40.1650.10">
    <property type="entry name" value="RbsD-like domain"/>
    <property type="match status" value="1"/>
</dbReference>
<dbReference type="HAMAP" id="MF_01661">
    <property type="entry name" value="D_rib_pyranase"/>
    <property type="match status" value="1"/>
</dbReference>
<dbReference type="InterPro" id="IPR023064">
    <property type="entry name" value="D-ribose_pyranase"/>
</dbReference>
<dbReference type="InterPro" id="IPR023750">
    <property type="entry name" value="RbsD-like_sf"/>
</dbReference>
<dbReference type="InterPro" id="IPR007721">
    <property type="entry name" value="RbsD_FucU"/>
</dbReference>
<dbReference type="NCBIfam" id="NF008761">
    <property type="entry name" value="PRK11797.1"/>
    <property type="match status" value="1"/>
</dbReference>
<dbReference type="PANTHER" id="PTHR37831">
    <property type="entry name" value="D-RIBOSE PYRANASE"/>
    <property type="match status" value="1"/>
</dbReference>
<dbReference type="PANTHER" id="PTHR37831:SF1">
    <property type="entry name" value="D-RIBOSE PYRANASE"/>
    <property type="match status" value="1"/>
</dbReference>
<dbReference type="Pfam" id="PF05025">
    <property type="entry name" value="RbsD_FucU"/>
    <property type="match status" value="1"/>
</dbReference>
<dbReference type="SUPFAM" id="SSF102546">
    <property type="entry name" value="RbsD-like"/>
    <property type="match status" value="1"/>
</dbReference>
<evidence type="ECO:0000255" key="1">
    <source>
        <dbReference type="HAMAP-Rule" id="MF_01661"/>
    </source>
</evidence>
<accession>Q04DK7</accession>
<protein>
    <recommendedName>
        <fullName evidence="1">D-ribose pyranase</fullName>
        <ecNumber evidence="1">5.4.99.62</ecNumber>
    </recommendedName>
</protein>
<name>RBSD_OENOB</name>
<keyword id="KW-0119">Carbohydrate metabolism</keyword>
<keyword id="KW-0963">Cytoplasm</keyword>
<keyword id="KW-0413">Isomerase</keyword>
<keyword id="KW-1185">Reference proteome</keyword>
<feature type="chain" id="PRO_0000346227" description="D-ribose pyranase">
    <location>
        <begin position="1"/>
        <end position="131"/>
    </location>
</feature>
<feature type="active site" description="Proton donor" evidence="1">
    <location>
        <position position="20"/>
    </location>
</feature>
<feature type="binding site" evidence="1">
    <location>
        <position position="28"/>
    </location>
    <ligand>
        <name>substrate</name>
    </ligand>
</feature>
<feature type="binding site" evidence="1">
    <location>
        <position position="98"/>
    </location>
    <ligand>
        <name>substrate</name>
    </ligand>
</feature>
<feature type="binding site" evidence="1">
    <location>
        <begin position="120"/>
        <end position="122"/>
    </location>
    <ligand>
        <name>substrate</name>
    </ligand>
</feature>
<comment type="function">
    <text evidence="1">Catalyzes the interconversion of beta-pyran and beta-furan forms of D-ribose.</text>
</comment>
<comment type="catalytic activity">
    <reaction evidence="1">
        <text>beta-D-ribopyranose = beta-D-ribofuranose</text>
        <dbReference type="Rhea" id="RHEA:25432"/>
        <dbReference type="ChEBI" id="CHEBI:27476"/>
        <dbReference type="ChEBI" id="CHEBI:47002"/>
        <dbReference type="EC" id="5.4.99.62"/>
    </reaction>
</comment>
<comment type="pathway">
    <text evidence="1">Carbohydrate metabolism; D-ribose degradation; D-ribose 5-phosphate from beta-D-ribopyranose: step 1/2.</text>
</comment>
<comment type="subunit">
    <text evidence="1">Homodecamer.</text>
</comment>
<comment type="subcellular location">
    <subcellularLocation>
        <location evidence="1">Cytoplasm</location>
    </subcellularLocation>
</comment>
<comment type="similarity">
    <text evidence="1">Belongs to the RbsD / FucU family. RbsD subfamily.</text>
</comment>
<proteinExistence type="inferred from homology"/>